<organism>
    <name type="scientific">Salmonella paratyphi A (strain AKU_12601)</name>
    <dbReference type="NCBI Taxonomy" id="554290"/>
    <lineage>
        <taxon>Bacteria</taxon>
        <taxon>Pseudomonadati</taxon>
        <taxon>Pseudomonadota</taxon>
        <taxon>Gammaproteobacteria</taxon>
        <taxon>Enterobacterales</taxon>
        <taxon>Enterobacteriaceae</taxon>
        <taxon>Salmonella</taxon>
    </lineage>
</organism>
<dbReference type="EMBL" id="FM200053">
    <property type="protein sequence ID" value="CAR59844.1"/>
    <property type="molecule type" value="Genomic_DNA"/>
</dbReference>
<dbReference type="RefSeq" id="WP_000288732.1">
    <property type="nucleotide sequence ID" value="NC_011147.1"/>
</dbReference>
<dbReference type="SMR" id="B5BBK9"/>
<dbReference type="KEGG" id="sek:SSPA1652"/>
<dbReference type="HOGENOM" id="CLU_118972_1_0_6"/>
<dbReference type="Proteomes" id="UP000001869">
    <property type="component" value="Chromosome"/>
</dbReference>
<dbReference type="GO" id="GO:0000917">
    <property type="term" value="P:division septum assembly"/>
    <property type="evidence" value="ECO:0007669"/>
    <property type="project" value="UniProtKB-KW"/>
</dbReference>
<dbReference type="GO" id="GO:0006281">
    <property type="term" value="P:DNA repair"/>
    <property type="evidence" value="ECO:0007669"/>
    <property type="project" value="TreeGrafter"/>
</dbReference>
<dbReference type="GO" id="GO:0051782">
    <property type="term" value="P:negative regulation of cell division"/>
    <property type="evidence" value="ECO:0007669"/>
    <property type="project" value="UniProtKB-UniRule"/>
</dbReference>
<dbReference type="GO" id="GO:0009432">
    <property type="term" value="P:SOS response"/>
    <property type="evidence" value="ECO:0007669"/>
    <property type="project" value="UniProtKB-UniRule"/>
</dbReference>
<dbReference type="FunFam" id="3.40.50.300:FF:000417">
    <property type="entry name" value="Cell division inhibitor SulA"/>
    <property type="match status" value="1"/>
</dbReference>
<dbReference type="Gene3D" id="3.40.50.300">
    <property type="entry name" value="P-loop containing nucleotide triphosphate hydrolases"/>
    <property type="match status" value="1"/>
</dbReference>
<dbReference type="HAMAP" id="MF_01179">
    <property type="entry name" value="SulA"/>
    <property type="match status" value="1"/>
</dbReference>
<dbReference type="InterPro" id="IPR004596">
    <property type="entry name" value="Cell_div_suppressor_SulA"/>
</dbReference>
<dbReference type="InterPro" id="IPR027417">
    <property type="entry name" value="P-loop_NTPase"/>
</dbReference>
<dbReference type="InterPro" id="IPR050356">
    <property type="entry name" value="SulA_CellDiv_inhibitor"/>
</dbReference>
<dbReference type="InterPro" id="IPR047696">
    <property type="entry name" value="SulA_enterobact"/>
</dbReference>
<dbReference type="NCBIfam" id="NF007892">
    <property type="entry name" value="PRK10595.1"/>
    <property type="match status" value="1"/>
</dbReference>
<dbReference type="NCBIfam" id="TIGR00623">
    <property type="entry name" value="SOS_SulA_coli"/>
    <property type="match status" value="1"/>
</dbReference>
<dbReference type="PANTHER" id="PTHR35369">
    <property type="entry name" value="BLR3025 PROTEIN-RELATED"/>
    <property type="match status" value="1"/>
</dbReference>
<dbReference type="PANTHER" id="PTHR35369:SF4">
    <property type="entry name" value="CELL DIVISION INHIBITOR SULA"/>
    <property type="match status" value="1"/>
</dbReference>
<dbReference type="Pfam" id="PF03846">
    <property type="entry name" value="SulA"/>
    <property type="match status" value="1"/>
</dbReference>
<dbReference type="PIRSF" id="PIRSF003093">
    <property type="entry name" value="SulA"/>
    <property type="match status" value="1"/>
</dbReference>
<dbReference type="SUPFAM" id="SSF52540">
    <property type="entry name" value="P-loop containing nucleoside triphosphate hydrolases"/>
    <property type="match status" value="1"/>
</dbReference>
<name>SULA_SALPK</name>
<sequence>MYTSGYANRSSSFPTTTHNAARTATENAAAGLVSEVVYHEDQPMMAQLLLLPLLRQLGQQSRWQLWLTPQQKLSREWVQSSGLPLTKVMQISQLAPRHTLESMIRALRTGNYSVVIGWMTEELTEEEHASLVEAAKVGNAVGFIMRPVRAHALPRRQHSGLKIHSNLYH</sequence>
<protein>
    <recommendedName>
        <fullName evidence="1">Cell division inhibitor SulA</fullName>
    </recommendedName>
</protein>
<proteinExistence type="inferred from homology"/>
<gene>
    <name evidence="1" type="primary">sulA</name>
    <name type="ordered locus">SSPA1652</name>
</gene>
<feature type="chain" id="PRO_1000138170" description="Cell division inhibitor SulA">
    <location>
        <begin position="1"/>
        <end position="169"/>
    </location>
</feature>
<feature type="region of interest" description="FtsZ binding" evidence="1">
    <location>
        <begin position="106"/>
        <end position="112"/>
    </location>
</feature>
<feature type="region of interest" description="Lon protease binding" evidence="1">
    <location>
        <begin position="162"/>
        <end position="169"/>
    </location>
</feature>
<feature type="site" description="Essential for degradation by Lon protease" evidence="1">
    <location>
        <position position="169"/>
    </location>
</feature>
<comment type="function">
    <text evidence="1">Component of the SOS system and an inhibitor of cell division. Accumulation of SulA causes rapid cessation of cell division and the appearance of long, non-septate filaments. In the presence of GTP, binds a polymerization-competent form of FtsZ in a 1:1 ratio, thus inhibiting FtsZ polymerization and therefore preventing it from participating in the assembly of the Z ring. This mechanism prevents the premature segregation of damaged DNA to daughter cells during cell division.</text>
</comment>
<comment type="subunit">
    <text evidence="1">Interacts with FtsZ.</text>
</comment>
<comment type="induction">
    <text evidence="1">By DNA damage, as part of the SOS response.</text>
</comment>
<comment type="PTM">
    <text evidence="1">Is rapidly cleaved and degraded by the Lon protease once DNA damage is repaired.</text>
</comment>
<comment type="similarity">
    <text evidence="1">Belongs to the SulA family.</text>
</comment>
<reference key="1">
    <citation type="journal article" date="2009" name="BMC Genomics">
        <title>Pseudogene accumulation in the evolutionary histories of Salmonella enterica serovars Paratyphi A and Typhi.</title>
        <authorList>
            <person name="Holt K.E."/>
            <person name="Thomson N.R."/>
            <person name="Wain J."/>
            <person name="Langridge G.C."/>
            <person name="Hasan R."/>
            <person name="Bhutta Z.A."/>
            <person name="Quail M.A."/>
            <person name="Norbertczak H."/>
            <person name="Walker D."/>
            <person name="Simmonds M."/>
            <person name="White B."/>
            <person name="Bason N."/>
            <person name="Mungall K."/>
            <person name="Dougan G."/>
            <person name="Parkhill J."/>
        </authorList>
    </citation>
    <scope>NUCLEOTIDE SEQUENCE [LARGE SCALE GENOMIC DNA]</scope>
    <source>
        <strain>AKU_12601</strain>
    </source>
</reference>
<evidence type="ECO:0000255" key="1">
    <source>
        <dbReference type="HAMAP-Rule" id="MF_01179"/>
    </source>
</evidence>
<accession>B5BBK9</accession>
<keyword id="KW-0131">Cell cycle</keyword>
<keyword id="KW-0132">Cell division</keyword>
<keyword id="KW-0227">DNA damage</keyword>
<keyword id="KW-0717">Septation</keyword>
<keyword id="KW-0742">SOS response</keyword>